<reference key="1">
    <citation type="journal article" date="2003" name="Science">
        <title>A genomic view of the human-Bacteroides thetaiotaomicron symbiosis.</title>
        <authorList>
            <person name="Xu J."/>
            <person name="Bjursell M.K."/>
            <person name="Himrod J."/>
            <person name="Deng S."/>
            <person name="Carmichael L.K."/>
            <person name="Chiang H.C."/>
            <person name="Hooper L.V."/>
            <person name="Gordon J.I."/>
        </authorList>
    </citation>
    <scope>NUCLEOTIDE SEQUENCE [LARGE SCALE GENOMIC DNA]</scope>
    <source>
        <strain>ATCC 29148 / DSM 2079 / JCM 5827 / CCUG 10774 / NCTC 10582 / VPI-5482 / E50</strain>
    </source>
</reference>
<accession>Q8A044</accession>
<evidence type="ECO:0000255" key="1">
    <source>
        <dbReference type="HAMAP-Rule" id="MF_01663"/>
    </source>
</evidence>
<protein>
    <recommendedName>
        <fullName evidence="1">L-rhamnose mutarotase</fullName>
        <ecNumber evidence="1">5.1.3.32</ecNumber>
    </recommendedName>
    <alternativeName>
        <fullName evidence="1">Rhamnose 1-epimerase</fullName>
    </alternativeName>
    <alternativeName>
        <fullName evidence="1">Type-3 mutarotase</fullName>
    </alternativeName>
</protein>
<keyword id="KW-0119">Carbohydrate metabolism</keyword>
<keyword id="KW-0963">Cytoplasm</keyword>
<keyword id="KW-0413">Isomerase</keyword>
<keyword id="KW-1185">Reference proteome</keyword>
<keyword id="KW-0684">Rhamnose metabolism</keyword>
<organism>
    <name type="scientific">Bacteroides thetaiotaomicron (strain ATCC 29148 / DSM 2079 / JCM 5827 / CCUG 10774 / NCTC 10582 / VPI-5482 / E50)</name>
    <dbReference type="NCBI Taxonomy" id="226186"/>
    <lineage>
        <taxon>Bacteria</taxon>
        <taxon>Pseudomonadati</taxon>
        <taxon>Bacteroidota</taxon>
        <taxon>Bacteroidia</taxon>
        <taxon>Bacteroidales</taxon>
        <taxon>Bacteroidaceae</taxon>
        <taxon>Bacteroides</taxon>
    </lineage>
</organism>
<sequence length="104" mass="12123">MKREAFKMYLKPGYEAEYEKRHAAIWPELKALLSKNGVSDYSIYWDKETNILFAFQKTEGEGGSQDLGNTEIVQKWWDYMADIMEVNPDNSPVSIPLPEVFHMD</sequence>
<dbReference type="EC" id="5.1.3.32" evidence="1"/>
<dbReference type="EMBL" id="AE015928">
    <property type="protein sequence ID" value="AAO79282.1"/>
    <property type="molecule type" value="Genomic_DNA"/>
</dbReference>
<dbReference type="RefSeq" id="NP_813088.1">
    <property type="nucleotide sequence ID" value="NC_004663.1"/>
</dbReference>
<dbReference type="RefSeq" id="WP_008759851.1">
    <property type="nucleotide sequence ID" value="NZ_UYXG01000012.1"/>
</dbReference>
<dbReference type="SMR" id="Q8A044"/>
<dbReference type="FunCoup" id="Q8A044">
    <property type="interactions" value="91"/>
</dbReference>
<dbReference type="STRING" id="226186.BT_4177"/>
<dbReference type="PaxDb" id="226186-BT_4177"/>
<dbReference type="EnsemblBacteria" id="AAO79282">
    <property type="protein sequence ID" value="AAO79282"/>
    <property type="gene ID" value="BT_4177"/>
</dbReference>
<dbReference type="GeneID" id="60925351"/>
<dbReference type="KEGG" id="bth:BT_4177"/>
<dbReference type="PATRIC" id="fig|226186.12.peg.4244"/>
<dbReference type="eggNOG" id="COG3254">
    <property type="taxonomic scope" value="Bacteria"/>
</dbReference>
<dbReference type="HOGENOM" id="CLU_100689_2_0_10"/>
<dbReference type="InParanoid" id="Q8A044"/>
<dbReference type="OrthoDB" id="9799608at2"/>
<dbReference type="UniPathway" id="UPA00125"/>
<dbReference type="Proteomes" id="UP000001414">
    <property type="component" value="Chromosome"/>
</dbReference>
<dbReference type="GO" id="GO:0005737">
    <property type="term" value="C:cytoplasm"/>
    <property type="evidence" value="ECO:0007669"/>
    <property type="project" value="UniProtKB-SubCell"/>
</dbReference>
<dbReference type="GO" id="GO:0062192">
    <property type="term" value="F:L-rhamnose mutarotase activity"/>
    <property type="evidence" value="ECO:0007669"/>
    <property type="project" value="UniProtKB-EC"/>
</dbReference>
<dbReference type="GO" id="GO:0016857">
    <property type="term" value="F:racemase and epimerase activity, acting on carbohydrates and derivatives"/>
    <property type="evidence" value="ECO:0000318"/>
    <property type="project" value="GO_Central"/>
</dbReference>
<dbReference type="GO" id="GO:0019301">
    <property type="term" value="P:rhamnose catabolic process"/>
    <property type="evidence" value="ECO:0000318"/>
    <property type="project" value="GO_Central"/>
</dbReference>
<dbReference type="Gene3D" id="3.30.70.100">
    <property type="match status" value="1"/>
</dbReference>
<dbReference type="HAMAP" id="MF_01663">
    <property type="entry name" value="L_rham_rotase"/>
    <property type="match status" value="1"/>
</dbReference>
<dbReference type="InterPro" id="IPR011008">
    <property type="entry name" value="Dimeric_a/b-barrel"/>
</dbReference>
<dbReference type="InterPro" id="IPR013448">
    <property type="entry name" value="L-rhamnose_mutarotase"/>
</dbReference>
<dbReference type="InterPro" id="IPR008000">
    <property type="entry name" value="Rham/fucose_mutarotase"/>
</dbReference>
<dbReference type="NCBIfam" id="TIGR02625">
    <property type="entry name" value="YiiL_rotase"/>
    <property type="match status" value="1"/>
</dbReference>
<dbReference type="PANTHER" id="PTHR34389">
    <property type="entry name" value="L-RHAMNOSE MUTAROTASE"/>
    <property type="match status" value="1"/>
</dbReference>
<dbReference type="PANTHER" id="PTHR34389:SF2">
    <property type="entry name" value="L-RHAMNOSE MUTAROTASE"/>
    <property type="match status" value="1"/>
</dbReference>
<dbReference type="Pfam" id="PF05336">
    <property type="entry name" value="rhaM"/>
    <property type="match status" value="1"/>
</dbReference>
<dbReference type="SUPFAM" id="SSF54909">
    <property type="entry name" value="Dimeric alpha+beta barrel"/>
    <property type="match status" value="1"/>
</dbReference>
<proteinExistence type="inferred from homology"/>
<feature type="chain" id="PRO_0000344553" description="L-rhamnose mutarotase">
    <location>
        <begin position="1"/>
        <end position="104"/>
    </location>
</feature>
<feature type="active site" description="Proton donor" evidence="1">
    <location>
        <position position="22"/>
    </location>
</feature>
<feature type="binding site" evidence="1">
    <location>
        <position position="18"/>
    </location>
    <ligand>
        <name>substrate</name>
    </ligand>
</feature>
<feature type="binding site" evidence="1">
    <location>
        <position position="41"/>
    </location>
    <ligand>
        <name>substrate</name>
    </ligand>
</feature>
<feature type="binding site" evidence="1">
    <location>
        <begin position="76"/>
        <end position="77"/>
    </location>
    <ligand>
        <name>substrate</name>
    </ligand>
</feature>
<gene>
    <name evidence="1" type="primary">rhaM</name>
    <name type="ordered locus">BT_4177</name>
</gene>
<comment type="function">
    <text evidence="1">Involved in the anomeric conversion of L-rhamnose.</text>
</comment>
<comment type="catalytic activity">
    <reaction evidence="1">
        <text>alpha-L-rhamnose = beta-L-rhamnose</text>
        <dbReference type="Rhea" id="RHEA:25584"/>
        <dbReference type="ChEBI" id="CHEBI:27586"/>
        <dbReference type="ChEBI" id="CHEBI:27907"/>
        <dbReference type="EC" id="5.1.3.32"/>
    </reaction>
</comment>
<comment type="pathway">
    <text evidence="1">Carbohydrate metabolism; L-rhamnose metabolism.</text>
</comment>
<comment type="subunit">
    <text evidence="1">Homodimer.</text>
</comment>
<comment type="subcellular location">
    <subcellularLocation>
        <location evidence="1">Cytoplasm</location>
    </subcellularLocation>
</comment>
<comment type="similarity">
    <text evidence="1">Belongs to the rhamnose mutarotase family.</text>
</comment>
<name>RHAM_BACTN</name>